<proteinExistence type="inferred from homology"/>
<protein>
    <recommendedName>
        <fullName>RNA polymerase sigma factor SigF</fullName>
        <shortName>Sigma factor SigF</shortName>
    </recommendedName>
    <alternativeName>
        <fullName>Alternative RNA polymerase sigma factor SigF</fullName>
    </alternativeName>
    <alternativeName>
        <fullName>RNA polymerase sigma-F factor</fullName>
        <shortName>Sigma-F factor</shortName>
    </alternativeName>
    <alternativeName>
        <fullName>Stress response/stationary phase sigma factor SigF</fullName>
    </alternativeName>
</protein>
<sequence>MTARAAGGSASRANEYADVPEMFRELVGLPAGSPEFQRHRDKIVQRCLPLADHIARRFEGRGEPRDDLIQVARVGLVNAAVRFDVKTGSDFVSFAVPTIMGEVRRHFRDNSWSVKVPRRLKELHLRLGTATADLSQRLGRAPSASELAAELGMDRAEVIEGLLAGSSYHTLSIDSGGGSDDDARAITDTLGDVDAGLDQIENREVLRPLLEALPERERTVLVLRFFDSMTQTQIAERVGISQMHVSRLLAKSLARLRDQLE</sequence>
<accession>P9WGI2</accession>
<accession>F2GKV9</accession>
<accession>Q50547</accession>
<accession>Q798K1</accession>
<accession>Q7D5S2</accession>
<organism>
    <name type="scientific">Mycobacterium tuberculosis (strain CDC 1551 / Oshkosh)</name>
    <dbReference type="NCBI Taxonomy" id="83331"/>
    <lineage>
        <taxon>Bacteria</taxon>
        <taxon>Bacillati</taxon>
        <taxon>Actinomycetota</taxon>
        <taxon>Actinomycetes</taxon>
        <taxon>Mycobacteriales</taxon>
        <taxon>Mycobacteriaceae</taxon>
        <taxon>Mycobacterium</taxon>
        <taxon>Mycobacterium tuberculosis complex</taxon>
    </lineage>
</organism>
<feature type="chain" id="PRO_0000428357" description="RNA polymerase sigma factor SigF">
    <location>
        <begin position="1"/>
        <end position="261"/>
    </location>
</feature>
<feature type="DNA-binding region" description="H-T-H motif" evidence="2">
    <location>
        <begin position="231"/>
        <end position="250"/>
    </location>
</feature>
<feature type="region of interest" description="Sigma-70 factor domain-2">
    <location>
        <begin position="43"/>
        <end position="112"/>
    </location>
</feature>
<feature type="region of interest" description="Sigma-70 factor domain-3">
    <location>
        <begin position="123"/>
        <end position="189"/>
    </location>
</feature>
<feature type="region of interest" description="Sigma-70 factor domain-4">
    <location>
        <begin position="209"/>
        <end position="258"/>
    </location>
</feature>
<feature type="short sequence motif" description="Interaction with polymerase core subunit RpoC" evidence="1">
    <location>
        <begin position="67"/>
        <end position="70"/>
    </location>
</feature>
<dbReference type="EMBL" id="AE000516">
    <property type="protein sequence ID" value="AAK47728.1"/>
    <property type="molecule type" value="Genomic_DNA"/>
</dbReference>
<dbReference type="RefSeq" id="WP_003417158.1">
    <property type="nucleotide sequence ID" value="NZ_KK341227.1"/>
</dbReference>
<dbReference type="SMR" id="P9WGI2"/>
<dbReference type="GeneID" id="45427282"/>
<dbReference type="KEGG" id="mtc:MT3385"/>
<dbReference type="PATRIC" id="fig|83331.31.peg.3643"/>
<dbReference type="HOGENOM" id="CLU_014793_8_5_11"/>
<dbReference type="Proteomes" id="UP000001020">
    <property type="component" value="Chromosome"/>
</dbReference>
<dbReference type="GO" id="GO:0003677">
    <property type="term" value="F:DNA binding"/>
    <property type="evidence" value="ECO:0007669"/>
    <property type="project" value="UniProtKB-KW"/>
</dbReference>
<dbReference type="GO" id="GO:0016987">
    <property type="term" value="F:sigma factor activity"/>
    <property type="evidence" value="ECO:0007669"/>
    <property type="project" value="UniProtKB-KW"/>
</dbReference>
<dbReference type="GO" id="GO:0006352">
    <property type="term" value="P:DNA-templated transcription initiation"/>
    <property type="evidence" value="ECO:0007669"/>
    <property type="project" value="InterPro"/>
</dbReference>
<dbReference type="CDD" id="cd06171">
    <property type="entry name" value="Sigma70_r4"/>
    <property type="match status" value="1"/>
</dbReference>
<dbReference type="FunFam" id="1.20.120.1810:FF:000007">
    <property type="entry name" value="RNA polymerase sigma factor SigF"/>
    <property type="match status" value="1"/>
</dbReference>
<dbReference type="Gene3D" id="1.20.120.1810">
    <property type="match status" value="1"/>
</dbReference>
<dbReference type="Gene3D" id="1.10.10.10">
    <property type="entry name" value="Winged helix-like DNA-binding domain superfamily/Winged helix DNA-binding domain"/>
    <property type="match status" value="2"/>
</dbReference>
<dbReference type="InterPro" id="IPR014284">
    <property type="entry name" value="RNA_pol_sigma-70_dom"/>
</dbReference>
<dbReference type="InterPro" id="IPR014322">
    <property type="entry name" value="RNA_pol_sigma-B/F/G"/>
</dbReference>
<dbReference type="InterPro" id="IPR000943">
    <property type="entry name" value="RNA_pol_sigma70"/>
</dbReference>
<dbReference type="InterPro" id="IPR007627">
    <property type="entry name" value="RNA_pol_sigma70_r2"/>
</dbReference>
<dbReference type="InterPro" id="IPR007624">
    <property type="entry name" value="RNA_pol_sigma70_r3"/>
</dbReference>
<dbReference type="InterPro" id="IPR007630">
    <property type="entry name" value="RNA_pol_sigma70_r4"/>
</dbReference>
<dbReference type="InterPro" id="IPR013325">
    <property type="entry name" value="RNA_pol_sigma_r2"/>
</dbReference>
<dbReference type="InterPro" id="IPR013324">
    <property type="entry name" value="RNA_pol_sigma_r3/r4-like"/>
</dbReference>
<dbReference type="InterPro" id="IPR036388">
    <property type="entry name" value="WH-like_DNA-bd_sf"/>
</dbReference>
<dbReference type="NCBIfam" id="NF005514">
    <property type="entry name" value="PRK07122.1"/>
    <property type="match status" value="1"/>
</dbReference>
<dbReference type="NCBIfam" id="TIGR02980">
    <property type="entry name" value="SigBFG"/>
    <property type="match status" value="1"/>
</dbReference>
<dbReference type="NCBIfam" id="TIGR02937">
    <property type="entry name" value="sigma70-ECF"/>
    <property type="match status" value="1"/>
</dbReference>
<dbReference type="PANTHER" id="PTHR30385:SF4">
    <property type="entry name" value="RNA POLYMERASE SIGMA-E FACTOR"/>
    <property type="match status" value="1"/>
</dbReference>
<dbReference type="PANTHER" id="PTHR30385">
    <property type="entry name" value="SIGMA FACTOR F FLAGELLAR"/>
    <property type="match status" value="1"/>
</dbReference>
<dbReference type="Pfam" id="PF04542">
    <property type="entry name" value="Sigma70_r2"/>
    <property type="match status" value="1"/>
</dbReference>
<dbReference type="Pfam" id="PF04539">
    <property type="entry name" value="Sigma70_r3"/>
    <property type="match status" value="1"/>
</dbReference>
<dbReference type="Pfam" id="PF04545">
    <property type="entry name" value="Sigma70_r4"/>
    <property type="match status" value="1"/>
</dbReference>
<dbReference type="PRINTS" id="PR00046">
    <property type="entry name" value="SIGMA70FCT"/>
</dbReference>
<dbReference type="SUPFAM" id="SSF88946">
    <property type="entry name" value="Sigma2 domain of RNA polymerase sigma factors"/>
    <property type="match status" value="1"/>
</dbReference>
<dbReference type="SUPFAM" id="SSF88659">
    <property type="entry name" value="Sigma3 and sigma4 domains of RNA polymerase sigma factors"/>
    <property type="match status" value="2"/>
</dbReference>
<comment type="function">
    <text evidence="4">Sigma factors are initiation factors that promote the attachment of RNA polymerase to specific initiation sites and are then released. Held in an inactive form by a cognate anti-sigma factor RsbW (UsfX) until released. Its regulon, determined following disruption, consists of 38 genes decreased in exponential phase, 187 genes decreased in early S-phase, and 277 genes decreased in late S-phase (PubMed:14977982).</text>
</comment>
<comment type="subunit">
    <text evidence="1">Monomer. Interacts transiently with the RNA polymerase catalytic core formed by RpoA, RpoB, RpoC and RpoZ (2 alpha, 1 beta, 1 beta' and 1 omega subunit) to form the RNA polymerase holoenzyme that can initiate transcription. Interacts (via sigma-70 factor domain 4) with anti-sigma-F factor RsbW (UsfX) (By similarity).</text>
</comment>
<comment type="domain">
    <text evidence="1">The sigma-70 factor domain-2 mediates sequence-specific interaction with the -10 element in promoter DNA, and plays an important role in melting the double-stranded DNA and the formation of the transcription bubble. The sigma-70 factor domain-2 mediates interaction with the RNA polymerase subunits RpoB and RpoC (By similarity).</text>
</comment>
<comment type="domain">
    <text evidence="1">The sigma-70 factor domain-4 contains a helix-turn-helix (H-T-H) motif that mediates interaction with the -35 element in promoter DNA. The domain also mediates interaction with the RNA polymerase subunit RpoA. Interactions between sigma-70 factor domain-4 and anti-sigma factors prevents interaction of sigma factors with the RNA polymerase catalytic core (By similarity).</text>
</comment>
<comment type="disruption phenotype">
    <text evidence="3 4">Not essential; grows to a higher density in stationary phase and a slight increase in susceptibility to rifamycin antibiotics. No effect on short-term intracellular survival and proliferation in human monocytes in vitro. BALB/c mice infected with mutant bacteria survived significantly longer (median survival 264 days versus 161 days for wild-type) and lost significantly less weight (PubMed:10992456). The CDC 1551 disruption in BALB/c and outbred Swiss-Webster mice showed smaller and fewer lesions and less inflammation in the lungs and spleen, and gave rabbits some degree of protection against subsequent M.bovis infection (PubMed:14977982).</text>
</comment>
<comment type="similarity">
    <text evidence="5">Belongs to the sigma-70 factor family.</text>
</comment>
<evidence type="ECO:0000250" key="1"/>
<evidence type="ECO:0000255" key="2"/>
<evidence type="ECO:0000269" key="3">
    <source>
    </source>
</evidence>
<evidence type="ECO:0000269" key="4">
    <source>
    </source>
</evidence>
<evidence type="ECO:0000305" key="5"/>
<reference key="1">
    <citation type="journal article" date="2002" name="J. Bacteriol.">
        <title>Whole-genome comparison of Mycobacterium tuberculosis clinical and laboratory strains.</title>
        <authorList>
            <person name="Fleischmann R.D."/>
            <person name="Alland D."/>
            <person name="Eisen J.A."/>
            <person name="Carpenter L."/>
            <person name="White O."/>
            <person name="Peterson J.D."/>
            <person name="DeBoy R.T."/>
            <person name="Dodson R.J."/>
            <person name="Gwinn M.L."/>
            <person name="Haft D.H."/>
            <person name="Hickey E.K."/>
            <person name="Kolonay J.F."/>
            <person name="Nelson W.C."/>
            <person name="Umayam L.A."/>
            <person name="Ermolaeva M.D."/>
            <person name="Salzberg S.L."/>
            <person name="Delcher A."/>
            <person name="Utterback T.R."/>
            <person name="Weidman J.F."/>
            <person name="Khouri H.M."/>
            <person name="Gill J."/>
            <person name="Mikula A."/>
            <person name="Bishai W."/>
            <person name="Jacobs W.R. Jr."/>
            <person name="Venter J.C."/>
            <person name="Fraser C.M."/>
        </authorList>
    </citation>
    <scope>NUCLEOTIDE SEQUENCE [LARGE SCALE GENOMIC DNA]</scope>
    <source>
        <strain>CDC 1551 / Oshkosh</strain>
    </source>
</reference>
<reference key="2">
    <citation type="journal article" date="2000" name="Infect. Immun.">
        <title>Construction and characterization of a Mycobacterium tuberculosis mutant lacking the alternate sigma factor gene, sigF.</title>
        <authorList>
            <person name="Chen P."/>
            <person name="Ruiz R.E."/>
            <person name="Li Q."/>
            <person name="Silver R.F."/>
            <person name="Bishai W.R."/>
        </authorList>
    </citation>
    <scope>DISRUPTION PHENOTYPE</scope>
    <source>
        <strain>CDC 1551 / Oshkosh</strain>
    </source>
</reference>
<reference key="3">
    <citation type="journal article" date="2004" name="Infect. Immun.">
        <title>Attenuation of late-stage disease in mice infected by the Mycobacterium tuberculosis mutant lacking the SigF alternate sigma factor and identification of SigF-dependent genes by microarray analysis.</title>
        <authorList>
            <person name="Geiman D.E."/>
            <person name="Kaushal D."/>
            <person name="Ko C."/>
            <person name="Tyagi S."/>
            <person name="Manabe Y.C."/>
            <person name="Schroeder B.G."/>
            <person name="Fleischmann R.D."/>
            <person name="Morrison N.E."/>
            <person name="Converse P.J."/>
            <person name="Chen P."/>
            <person name="Bishai W.R."/>
        </authorList>
    </citation>
    <scope>FUNCTION</scope>
    <scope>REGULON</scope>
    <scope>DISRUPTION PHENOTYPE</scope>
    <source>
        <strain>CDC 1551 / Oshkosh</strain>
    </source>
</reference>
<keyword id="KW-0238">DNA-binding</keyword>
<keyword id="KW-1185">Reference proteome</keyword>
<keyword id="KW-0731">Sigma factor</keyword>
<keyword id="KW-0804">Transcription</keyword>
<keyword id="KW-0805">Transcription regulation</keyword>
<gene>
    <name type="primary">sigF</name>
    <name type="ordered locus">MT3385</name>
</gene>
<name>SIGF_MYCTO</name>